<keyword id="KW-0028">Amino-acid biosynthesis</keyword>
<keyword id="KW-0963">Cytoplasm</keyword>
<keyword id="KW-0521">NADP</keyword>
<keyword id="KW-0560">Oxidoreductase</keyword>
<keyword id="KW-0641">Proline biosynthesis</keyword>
<comment type="function">
    <text evidence="1">Catalyzes the NADPH-dependent reduction of L-glutamate 5-phosphate into L-glutamate 5-semialdehyde and phosphate. The product spontaneously undergoes cyclization to form 1-pyrroline-5-carboxylate.</text>
</comment>
<comment type="catalytic activity">
    <reaction evidence="1">
        <text>L-glutamate 5-semialdehyde + phosphate + NADP(+) = L-glutamyl 5-phosphate + NADPH + H(+)</text>
        <dbReference type="Rhea" id="RHEA:19541"/>
        <dbReference type="ChEBI" id="CHEBI:15378"/>
        <dbReference type="ChEBI" id="CHEBI:43474"/>
        <dbReference type="ChEBI" id="CHEBI:57783"/>
        <dbReference type="ChEBI" id="CHEBI:58066"/>
        <dbReference type="ChEBI" id="CHEBI:58274"/>
        <dbReference type="ChEBI" id="CHEBI:58349"/>
        <dbReference type="EC" id="1.2.1.41"/>
    </reaction>
</comment>
<comment type="pathway">
    <text evidence="1">Amino-acid biosynthesis; L-proline biosynthesis; L-glutamate 5-semialdehyde from L-glutamate: step 2/2.</text>
</comment>
<comment type="subcellular location">
    <subcellularLocation>
        <location evidence="1">Cytoplasm</location>
    </subcellularLocation>
</comment>
<comment type="similarity">
    <text evidence="1">Belongs to the gamma-glutamyl phosphate reductase family.</text>
</comment>
<reference key="1">
    <citation type="submission" date="2008-06" db="EMBL/GenBank/DDBJ databases">
        <title>Lactobacillus casei BL23 complete genome sequence.</title>
        <authorList>
            <person name="Maze A."/>
            <person name="Boel G."/>
            <person name="Bourand A."/>
            <person name="Loux V."/>
            <person name="Gibrat J.F."/>
            <person name="Zuniga M."/>
            <person name="Hartke A."/>
            <person name="Deutscher J."/>
        </authorList>
    </citation>
    <scope>NUCLEOTIDE SEQUENCE [LARGE SCALE GENOMIC DNA]</scope>
    <source>
        <strain>BL23</strain>
    </source>
</reference>
<protein>
    <recommendedName>
        <fullName evidence="1">Gamma-glutamyl phosphate reductase</fullName>
        <shortName evidence="1">GPR</shortName>
        <ecNumber evidence="1">1.2.1.41</ecNumber>
    </recommendedName>
    <alternativeName>
        <fullName evidence="1">Glutamate-5-semialdehyde dehydrogenase</fullName>
    </alternativeName>
    <alternativeName>
        <fullName evidence="1">Glutamyl-gamma-semialdehyde dehydrogenase</fullName>
        <shortName evidence="1">GSA dehydrogenase</shortName>
    </alternativeName>
</protein>
<accession>B3WA82</accession>
<gene>
    <name evidence="1" type="primary">proA</name>
    <name type="ordered locus">LCABL_25350</name>
</gene>
<proteinExistence type="inferred from homology"/>
<sequence>MDATTIDLEQMGRAAKTAAMTLGQLTTLQKNTGLLAMAAALETHADTILAANKADLAAASALPEKFVDRLALTKARIADMAAGVRQVATLDDPTAQTDRAWVNEAGLTIAQKRVPLGVVGMIYEARPNVTVDAAALTFKSGNAVILRGGKEALHSNLALATVLQDALAAKGLPRDAVQLITDPSRAVATQMMHLNGYIDVLIPRGGKGLIKAVVEQATVPVIETGAGNCHIYVDAHAQLQMAVAIVVNAKVQRPSVCNAAEKLLIHADVANEQLPVIAKALQDHGVELRGDERARAIVPSMHAATAEDWDTEYNDLIMAVKVVDSEEEAIQHINAHNTKHSEAIITDNYQNSQQFLQQVDAAVVYVNASTRFTDGYEFGFGAEIGISTQKLHARGPMGLAALTTIKYQVLGNGQIRKN</sequence>
<organism>
    <name type="scientific">Lacticaseibacillus casei (strain BL23)</name>
    <name type="common">Lactobacillus casei</name>
    <dbReference type="NCBI Taxonomy" id="543734"/>
    <lineage>
        <taxon>Bacteria</taxon>
        <taxon>Bacillati</taxon>
        <taxon>Bacillota</taxon>
        <taxon>Bacilli</taxon>
        <taxon>Lactobacillales</taxon>
        <taxon>Lactobacillaceae</taxon>
        <taxon>Lacticaseibacillus</taxon>
    </lineage>
</organism>
<evidence type="ECO:0000255" key="1">
    <source>
        <dbReference type="HAMAP-Rule" id="MF_00412"/>
    </source>
</evidence>
<name>PROA_LACCB</name>
<dbReference type="EC" id="1.2.1.41" evidence="1"/>
<dbReference type="EMBL" id="FM177140">
    <property type="protein sequence ID" value="CAQ67601.1"/>
    <property type="molecule type" value="Genomic_DNA"/>
</dbReference>
<dbReference type="SMR" id="B3WA82"/>
<dbReference type="KEGG" id="lcb:LCABL_25350"/>
<dbReference type="HOGENOM" id="CLU_030231_0_0_9"/>
<dbReference type="UniPathway" id="UPA00098">
    <property type="reaction ID" value="UER00360"/>
</dbReference>
<dbReference type="GO" id="GO:0005737">
    <property type="term" value="C:cytoplasm"/>
    <property type="evidence" value="ECO:0007669"/>
    <property type="project" value="UniProtKB-SubCell"/>
</dbReference>
<dbReference type="GO" id="GO:0004350">
    <property type="term" value="F:glutamate-5-semialdehyde dehydrogenase activity"/>
    <property type="evidence" value="ECO:0007669"/>
    <property type="project" value="UniProtKB-UniRule"/>
</dbReference>
<dbReference type="GO" id="GO:0050661">
    <property type="term" value="F:NADP binding"/>
    <property type="evidence" value="ECO:0007669"/>
    <property type="project" value="InterPro"/>
</dbReference>
<dbReference type="GO" id="GO:0055129">
    <property type="term" value="P:L-proline biosynthetic process"/>
    <property type="evidence" value="ECO:0007669"/>
    <property type="project" value="UniProtKB-UniRule"/>
</dbReference>
<dbReference type="CDD" id="cd07079">
    <property type="entry name" value="ALDH_F18-19_ProA-GPR"/>
    <property type="match status" value="1"/>
</dbReference>
<dbReference type="FunFam" id="3.40.309.10:FF:000006">
    <property type="entry name" value="Gamma-glutamyl phosphate reductase"/>
    <property type="match status" value="1"/>
</dbReference>
<dbReference type="Gene3D" id="3.40.605.10">
    <property type="entry name" value="Aldehyde Dehydrogenase, Chain A, domain 1"/>
    <property type="match status" value="1"/>
</dbReference>
<dbReference type="Gene3D" id="3.40.309.10">
    <property type="entry name" value="Aldehyde Dehydrogenase, Chain A, domain 2"/>
    <property type="match status" value="1"/>
</dbReference>
<dbReference type="HAMAP" id="MF_00412">
    <property type="entry name" value="ProA"/>
    <property type="match status" value="1"/>
</dbReference>
<dbReference type="InterPro" id="IPR016161">
    <property type="entry name" value="Ald_DH/histidinol_DH"/>
</dbReference>
<dbReference type="InterPro" id="IPR016163">
    <property type="entry name" value="Ald_DH_C"/>
</dbReference>
<dbReference type="InterPro" id="IPR016162">
    <property type="entry name" value="Ald_DH_N"/>
</dbReference>
<dbReference type="InterPro" id="IPR015590">
    <property type="entry name" value="Aldehyde_DH_dom"/>
</dbReference>
<dbReference type="InterPro" id="IPR020593">
    <property type="entry name" value="G-glutamylP_reductase_CS"/>
</dbReference>
<dbReference type="InterPro" id="IPR012134">
    <property type="entry name" value="Glu-5-SA_DH"/>
</dbReference>
<dbReference type="InterPro" id="IPR000965">
    <property type="entry name" value="GPR_dom"/>
</dbReference>
<dbReference type="NCBIfam" id="NF001221">
    <property type="entry name" value="PRK00197.1"/>
    <property type="match status" value="1"/>
</dbReference>
<dbReference type="NCBIfam" id="TIGR00407">
    <property type="entry name" value="proA"/>
    <property type="match status" value="1"/>
</dbReference>
<dbReference type="PANTHER" id="PTHR11063:SF8">
    <property type="entry name" value="DELTA-1-PYRROLINE-5-CARBOXYLATE SYNTHASE"/>
    <property type="match status" value="1"/>
</dbReference>
<dbReference type="PANTHER" id="PTHR11063">
    <property type="entry name" value="GLUTAMATE SEMIALDEHYDE DEHYDROGENASE"/>
    <property type="match status" value="1"/>
</dbReference>
<dbReference type="Pfam" id="PF00171">
    <property type="entry name" value="Aldedh"/>
    <property type="match status" value="2"/>
</dbReference>
<dbReference type="PIRSF" id="PIRSF000151">
    <property type="entry name" value="GPR"/>
    <property type="match status" value="1"/>
</dbReference>
<dbReference type="SUPFAM" id="SSF53720">
    <property type="entry name" value="ALDH-like"/>
    <property type="match status" value="1"/>
</dbReference>
<dbReference type="PROSITE" id="PS01223">
    <property type="entry name" value="PROA"/>
    <property type="match status" value="1"/>
</dbReference>
<feature type="chain" id="PRO_1000123813" description="Gamma-glutamyl phosphate reductase">
    <location>
        <begin position="1"/>
        <end position="418"/>
    </location>
</feature>